<proteinExistence type="inferred from homology"/>
<gene>
    <name evidence="1" type="primary">speD</name>
    <name type="ordered locus">CA_C2601</name>
</gene>
<protein>
    <recommendedName>
        <fullName evidence="1">S-adenosylmethionine decarboxylase proenzyme</fullName>
        <shortName evidence="1">AdoMetDC</shortName>
        <shortName evidence="1">SAMDC</shortName>
        <ecNumber evidence="1">4.1.1.50</ecNumber>
    </recommendedName>
    <component>
        <recommendedName>
            <fullName evidence="1">S-adenosylmethionine decarboxylase beta chain</fullName>
        </recommendedName>
    </component>
    <component>
        <recommendedName>
            <fullName evidence="1">S-adenosylmethionine decarboxylase alpha chain</fullName>
        </recommendedName>
    </component>
</protein>
<name>SPED_CLOAB</name>
<keyword id="KW-0068">Autocatalytic cleavage</keyword>
<keyword id="KW-0210">Decarboxylase</keyword>
<keyword id="KW-0456">Lyase</keyword>
<keyword id="KW-0620">Polyamine biosynthesis</keyword>
<keyword id="KW-0670">Pyruvate</keyword>
<keyword id="KW-1185">Reference proteome</keyword>
<keyword id="KW-0949">S-adenosyl-L-methionine</keyword>
<keyword id="KW-0704">Schiff base</keyword>
<keyword id="KW-0745">Spermidine biosynthesis</keyword>
<keyword id="KW-0865">Zymogen</keyword>
<organism>
    <name type="scientific">Clostridium acetobutylicum (strain ATCC 824 / DSM 792 / JCM 1419 / IAM 19013 / LMG 5710 / NBRC 13948 / NRRL B-527 / VKM B-1787 / 2291 / W)</name>
    <dbReference type="NCBI Taxonomy" id="272562"/>
    <lineage>
        <taxon>Bacteria</taxon>
        <taxon>Bacillati</taxon>
        <taxon>Bacillota</taxon>
        <taxon>Clostridia</taxon>
        <taxon>Eubacteriales</taxon>
        <taxon>Clostridiaceae</taxon>
        <taxon>Clostridium</taxon>
    </lineage>
</organism>
<dbReference type="EC" id="4.1.1.50" evidence="1"/>
<dbReference type="EMBL" id="AE001437">
    <property type="protein sequence ID" value="AAK80549.1"/>
    <property type="molecule type" value="Genomic_DNA"/>
</dbReference>
<dbReference type="PIR" id="B97220">
    <property type="entry name" value="B97220"/>
</dbReference>
<dbReference type="RefSeq" id="NP_349209.1">
    <property type="nucleotide sequence ID" value="NC_003030.1"/>
</dbReference>
<dbReference type="RefSeq" id="WP_010965890.1">
    <property type="nucleotide sequence ID" value="NC_003030.1"/>
</dbReference>
<dbReference type="SMR" id="Q97FX4"/>
<dbReference type="STRING" id="272562.CA_C2601"/>
<dbReference type="GeneID" id="44999070"/>
<dbReference type="KEGG" id="cac:CA_C2601"/>
<dbReference type="PATRIC" id="fig|272562.8.peg.2790"/>
<dbReference type="eggNOG" id="COG1586">
    <property type="taxonomic scope" value="Bacteria"/>
</dbReference>
<dbReference type="HOGENOM" id="CLU_092007_0_0_9"/>
<dbReference type="OrthoDB" id="5290709at2"/>
<dbReference type="UniPathway" id="UPA00331">
    <property type="reaction ID" value="UER00451"/>
</dbReference>
<dbReference type="Proteomes" id="UP000000814">
    <property type="component" value="Chromosome"/>
</dbReference>
<dbReference type="GO" id="GO:0005829">
    <property type="term" value="C:cytosol"/>
    <property type="evidence" value="ECO:0007669"/>
    <property type="project" value="TreeGrafter"/>
</dbReference>
<dbReference type="GO" id="GO:0004014">
    <property type="term" value="F:adenosylmethionine decarboxylase activity"/>
    <property type="evidence" value="ECO:0007669"/>
    <property type="project" value="UniProtKB-UniRule"/>
</dbReference>
<dbReference type="GO" id="GO:0008295">
    <property type="term" value="P:spermidine biosynthetic process"/>
    <property type="evidence" value="ECO:0007669"/>
    <property type="project" value="UniProtKB-UniRule"/>
</dbReference>
<dbReference type="Gene3D" id="3.60.90.10">
    <property type="entry name" value="S-adenosylmethionine decarboxylase"/>
    <property type="match status" value="1"/>
</dbReference>
<dbReference type="HAMAP" id="MF_00465">
    <property type="entry name" value="AdoMetDC_2"/>
    <property type="match status" value="1"/>
</dbReference>
<dbReference type="InterPro" id="IPR003826">
    <property type="entry name" value="AdoMetDC_fam_prok"/>
</dbReference>
<dbReference type="InterPro" id="IPR009165">
    <property type="entry name" value="S-AdoMet_deCO2ase_bac"/>
</dbReference>
<dbReference type="InterPro" id="IPR016067">
    <property type="entry name" value="S-AdoMet_deCO2ase_core"/>
</dbReference>
<dbReference type="NCBIfam" id="TIGR03331">
    <property type="entry name" value="SAM_DCase_Eco"/>
    <property type="match status" value="1"/>
</dbReference>
<dbReference type="PANTHER" id="PTHR33866">
    <property type="entry name" value="S-ADENOSYLMETHIONINE DECARBOXYLASE PROENZYME"/>
    <property type="match status" value="1"/>
</dbReference>
<dbReference type="PANTHER" id="PTHR33866:SF1">
    <property type="entry name" value="S-ADENOSYLMETHIONINE DECARBOXYLASE PROENZYME"/>
    <property type="match status" value="1"/>
</dbReference>
<dbReference type="Pfam" id="PF02675">
    <property type="entry name" value="AdoMet_dc"/>
    <property type="match status" value="1"/>
</dbReference>
<dbReference type="PIRSF" id="PIRSF001356">
    <property type="entry name" value="SAM_decarboxylas"/>
    <property type="match status" value="1"/>
</dbReference>
<dbReference type="SUPFAM" id="SSF56276">
    <property type="entry name" value="S-adenosylmethionine decarboxylase"/>
    <property type="match status" value="1"/>
</dbReference>
<comment type="function">
    <text evidence="1">Catalyzes the decarboxylation of S-adenosylmethionine to S-adenosylmethioninamine (dcAdoMet), the propylamine donor required for the synthesis of the polyamines spermine and spermidine from the diamine putrescine.</text>
</comment>
<comment type="catalytic activity">
    <reaction evidence="1">
        <text>S-adenosyl-L-methionine + H(+) = S-adenosyl 3-(methylsulfanyl)propylamine + CO2</text>
        <dbReference type="Rhea" id="RHEA:15981"/>
        <dbReference type="ChEBI" id="CHEBI:15378"/>
        <dbReference type="ChEBI" id="CHEBI:16526"/>
        <dbReference type="ChEBI" id="CHEBI:57443"/>
        <dbReference type="ChEBI" id="CHEBI:59789"/>
        <dbReference type="EC" id="4.1.1.50"/>
    </reaction>
</comment>
<comment type="cofactor">
    <cofactor evidence="1">
        <name>pyruvate</name>
        <dbReference type="ChEBI" id="CHEBI:15361"/>
    </cofactor>
    <text evidence="1">Binds 1 pyruvoyl group covalently per subunit.</text>
</comment>
<comment type="pathway">
    <text evidence="1">Amine and polyamine biosynthesis; S-adenosylmethioninamine biosynthesis; S-adenosylmethioninamine from S-adenosyl-L-methionine: step 1/1.</text>
</comment>
<comment type="subunit">
    <text evidence="1">Heterooctamer of four alpha and four beta chains arranged as a tetramer of alpha/beta heterodimers.</text>
</comment>
<comment type="PTM">
    <text evidence="1">Is synthesized initially as an inactive proenzyme. Formation of the active enzyme involves a self-maturation process in which the active site pyruvoyl group is generated from an internal serine residue via an autocatalytic post-translational modification. Two non-identical subunits are generated from the proenzyme in this reaction, and the pyruvate is formed at the N-terminus of the alpha chain, which is derived from the carboxyl end of the proenzyme. The post-translation cleavage follows an unusual pathway, termed non-hydrolytic serinolysis, in which the side chain hydroxyl group of the serine supplies its oxygen atom to form the C-terminus of the beta chain, while the remainder of the serine residue undergoes an oxidative deamination to produce ammonia and the pyruvoyl group blocking the N-terminus of the alpha chain.</text>
</comment>
<comment type="similarity">
    <text evidence="1">Belongs to the prokaryotic AdoMetDC family. Type 2 subfamily.</text>
</comment>
<accession>Q97FX4</accession>
<reference key="1">
    <citation type="journal article" date="2001" name="J. Bacteriol.">
        <title>Genome sequence and comparative analysis of the solvent-producing bacterium Clostridium acetobutylicum.</title>
        <authorList>
            <person name="Noelling J."/>
            <person name="Breton G."/>
            <person name="Omelchenko M.V."/>
            <person name="Makarova K.S."/>
            <person name="Zeng Q."/>
            <person name="Gibson R."/>
            <person name="Lee H.M."/>
            <person name="Dubois J."/>
            <person name="Qiu D."/>
            <person name="Hitti J."/>
            <person name="Wolf Y.I."/>
            <person name="Tatusov R.L."/>
            <person name="Sabathe F."/>
            <person name="Doucette-Stamm L.A."/>
            <person name="Soucaille P."/>
            <person name="Daly M.J."/>
            <person name="Bennett G.N."/>
            <person name="Koonin E.V."/>
            <person name="Smith D.R."/>
        </authorList>
    </citation>
    <scope>NUCLEOTIDE SEQUENCE [LARGE SCALE GENOMIC DNA]</scope>
    <source>
        <strain>ATCC 824 / DSM 792 / JCM 1419 / IAM 19013 / LMG 5710 / NBRC 13948 / NRRL B-527 / VKM B-1787 / 2291 / W</strain>
    </source>
</reference>
<evidence type="ECO:0000255" key="1">
    <source>
        <dbReference type="HAMAP-Rule" id="MF_00465"/>
    </source>
</evidence>
<sequence length="274" mass="32070">MKVNIDNKIKLHGFNNLTKTLSFNMYDICYAKSAEDREAYISYIDEQYNADRLTEILTNVTEIIGANILNIAKQDYDPQGASVTILVCENPIEEERKEALVKETPGPLPEIVLAHLDKSHITVHTYPEYHPDEGICTFRADIDVSTCGMISPLRALNYLVHSFEADIMTMDYRVRGFTRDITGRKLFIDHKINSIQNYIPSNIKTKYNMIDVNVYQENIFHTKCRLKQFDLDNYLFGYTKKDLYPKERKKITHKLKKEMDEIFYGKNFDEVYYK</sequence>
<feature type="chain" id="PRO_0000030039" description="S-adenosylmethionine decarboxylase beta chain" evidence="1">
    <location>
        <begin position="1"/>
        <end position="118"/>
    </location>
</feature>
<feature type="chain" id="PRO_0000030040" description="S-adenosylmethionine decarboxylase alpha chain" evidence="1">
    <location>
        <begin position="119"/>
        <end position="274"/>
    </location>
</feature>
<feature type="active site" description="Schiff-base intermediate with substrate; via pyruvic acid" evidence="1">
    <location>
        <position position="119"/>
    </location>
</feature>
<feature type="active site" description="Proton acceptor; for processing activity" evidence="1">
    <location>
        <position position="124"/>
    </location>
</feature>
<feature type="active site" description="Proton donor; for catalytic activity" evidence="1">
    <location>
        <position position="147"/>
    </location>
</feature>
<feature type="site" description="Cleavage (non-hydrolytic); by autolysis" evidence="1">
    <location>
        <begin position="118"/>
        <end position="119"/>
    </location>
</feature>
<feature type="modified residue" description="Pyruvic acid (Ser); by autocatalysis" evidence="1">
    <location>
        <position position="119"/>
    </location>
</feature>